<comment type="function">
    <text evidence="1">Mitochondrial transporter that mediates uptake of thiamine pyrophosphate (ThPP) into mitochondria.</text>
</comment>
<comment type="subcellular location">
    <subcellularLocation>
        <location evidence="1">Mitochondrion inner membrane</location>
        <topology evidence="1">Multi-pass membrane protein</topology>
    </subcellularLocation>
</comment>
<comment type="similarity">
    <text evidence="3">Belongs to the mitochondrial carrier (TC 2.A.29) family.</text>
</comment>
<organism>
    <name type="scientific">Pyricularia oryzae (strain 70-15 / ATCC MYA-4617 / FGSC 8958)</name>
    <name type="common">Rice blast fungus</name>
    <name type="synonym">Magnaporthe oryzae</name>
    <dbReference type="NCBI Taxonomy" id="242507"/>
    <lineage>
        <taxon>Eukaryota</taxon>
        <taxon>Fungi</taxon>
        <taxon>Dikarya</taxon>
        <taxon>Ascomycota</taxon>
        <taxon>Pezizomycotina</taxon>
        <taxon>Sordariomycetes</taxon>
        <taxon>Sordariomycetidae</taxon>
        <taxon>Magnaporthales</taxon>
        <taxon>Pyriculariaceae</taxon>
        <taxon>Pyricularia</taxon>
    </lineage>
</organism>
<evidence type="ECO:0000250" key="1"/>
<evidence type="ECO:0000255" key="2"/>
<evidence type="ECO:0000305" key="3"/>
<proteinExistence type="inferred from homology"/>
<name>TPC1_PYRO7</name>
<dbReference type="EMBL" id="CM001235">
    <property type="protein sequence ID" value="EHA48989.1"/>
    <property type="molecule type" value="Genomic_DNA"/>
</dbReference>
<dbReference type="RefSeq" id="XP_003718573.1">
    <property type="nucleotide sequence ID" value="XM_003718525.1"/>
</dbReference>
<dbReference type="SMR" id="A4RF23"/>
<dbReference type="FunCoup" id="A4RF23">
    <property type="interactions" value="32"/>
</dbReference>
<dbReference type="STRING" id="242507.A4RF23"/>
<dbReference type="EnsemblFungi" id="MGG_00489T0">
    <property type="protein sequence ID" value="MGG_00489T0"/>
    <property type="gene ID" value="MGG_00489"/>
</dbReference>
<dbReference type="GeneID" id="2674933"/>
<dbReference type="KEGG" id="mgr:MGG_00489"/>
<dbReference type="VEuPathDB" id="FungiDB:MGG_00489"/>
<dbReference type="eggNOG" id="KOG0752">
    <property type="taxonomic scope" value="Eukaryota"/>
</dbReference>
<dbReference type="HOGENOM" id="CLU_015166_10_3_1"/>
<dbReference type="InParanoid" id="A4RF23"/>
<dbReference type="OMA" id="MYVCYGA"/>
<dbReference type="OrthoDB" id="18574at2759"/>
<dbReference type="Proteomes" id="UP000009058">
    <property type="component" value="Chromosome 5"/>
</dbReference>
<dbReference type="GO" id="GO:0005743">
    <property type="term" value="C:mitochondrial inner membrane"/>
    <property type="evidence" value="ECO:0007669"/>
    <property type="project" value="UniProtKB-SubCell"/>
</dbReference>
<dbReference type="GO" id="GO:0055085">
    <property type="term" value="P:transmembrane transport"/>
    <property type="evidence" value="ECO:0007669"/>
    <property type="project" value="InterPro"/>
</dbReference>
<dbReference type="FunFam" id="1.50.40.10:FF:000011">
    <property type="entry name" value="Mitochondrial thiamine pyrophosphate carrier 1"/>
    <property type="match status" value="1"/>
</dbReference>
<dbReference type="Gene3D" id="1.50.40.10">
    <property type="entry name" value="Mitochondrial carrier domain"/>
    <property type="match status" value="1"/>
</dbReference>
<dbReference type="InterPro" id="IPR002067">
    <property type="entry name" value="Mit_carrier"/>
</dbReference>
<dbReference type="InterPro" id="IPR018108">
    <property type="entry name" value="Mitochondrial_sb/sol_carrier"/>
</dbReference>
<dbReference type="InterPro" id="IPR023395">
    <property type="entry name" value="Mt_carrier_dom_sf"/>
</dbReference>
<dbReference type="PANTHER" id="PTHR24089">
    <property type="entry name" value="SOLUTE CARRIER FAMILY 25"/>
    <property type="match status" value="1"/>
</dbReference>
<dbReference type="Pfam" id="PF00153">
    <property type="entry name" value="Mito_carr"/>
    <property type="match status" value="3"/>
</dbReference>
<dbReference type="PRINTS" id="PR00926">
    <property type="entry name" value="MITOCARRIER"/>
</dbReference>
<dbReference type="SUPFAM" id="SSF103506">
    <property type="entry name" value="Mitochondrial carrier"/>
    <property type="match status" value="1"/>
</dbReference>
<dbReference type="PROSITE" id="PS50920">
    <property type="entry name" value="SOLCAR"/>
    <property type="match status" value="3"/>
</dbReference>
<keyword id="KW-0472">Membrane</keyword>
<keyword id="KW-0496">Mitochondrion</keyword>
<keyword id="KW-0999">Mitochondrion inner membrane</keyword>
<keyword id="KW-1185">Reference proteome</keyword>
<keyword id="KW-0677">Repeat</keyword>
<keyword id="KW-0812">Transmembrane</keyword>
<keyword id="KW-1133">Transmembrane helix</keyword>
<keyword id="KW-0813">Transport</keyword>
<gene>
    <name type="primary">TPC1</name>
    <name type="ORF">MGG_00489</name>
</gene>
<accession>A4RF23</accession>
<accession>G4NBT1</accession>
<reference key="1">
    <citation type="journal article" date="2005" name="Nature">
        <title>The genome sequence of the rice blast fungus Magnaporthe grisea.</title>
        <authorList>
            <person name="Dean R.A."/>
            <person name="Talbot N.J."/>
            <person name="Ebbole D.J."/>
            <person name="Farman M.L."/>
            <person name="Mitchell T.K."/>
            <person name="Orbach M.J."/>
            <person name="Thon M.R."/>
            <person name="Kulkarni R."/>
            <person name="Xu J.-R."/>
            <person name="Pan H."/>
            <person name="Read N.D."/>
            <person name="Lee Y.-H."/>
            <person name="Carbone I."/>
            <person name="Brown D."/>
            <person name="Oh Y.Y."/>
            <person name="Donofrio N."/>
            <person name="Jeong J.S."/>
            <person name="Soanes D.M."/>
            <person name="Djonovic S."/>
            <person name="Kolomiets E."/>
            <person name="Rehmeyer C."/>
            <person name="Li W."/>
            <person name="Harding M."/>
            <person name="Kim S."/>
            <person name="Lebrun M.-H."/>
            <person name="Bohnert H."/>
            <person name="Coughlan S."/>
            <person name="Butler J."/>
            <person name="Calvo S.E."/>
            <person name="Ma L.-J."/>
            <person name="Nicol R."/>
            <person name="Purcell S."/>
            <person name="Nusbaum C."/>
            <person name="Galagan J.E."/>
            <person name="Birren B.W."/>
        </authorList>
    </citation>
    <scope>NUCLEOTIDE SEQUENCE [LARGE SCALE GENOMIC DNA]</scope>
    <source>
        <strain>70-15 / ATCC MYA-4617 / FGSC 8958</strain>
    </source>
</reference>
<sequence>MSAANTERLKDEGSKLQVVVAGATAGMIARFVIAPLDVVKIRLQLQTHSLSDPLSQRAELLRGGPVYKGTLSTMRHIARQEGITGLWKGNVPAELLYITYSAVQFATYRSAAQLLHRVAGEDRQLPAAAESFVAGAAAGVTSTTVTYPLDLLRTRFAAQGSGDDRVYQSLRRAVADIWRDEGYRGFFRGIGPAVGQTFPFMGIFFAAYESLRAPLADLKLPFWGGQLALASMTASTLAKTAVFPLDLVRRRIQVQGPTRSKYVHKNIPEYKGTFSTISTIARTEGFRGLYRGLTVSLIKSAPASAVTMWTYERVLRALITFQSGRQD</sequence>
<feature type="chain" id="PRO_0000320468" description="Mitochondrial thiamine pyrophosphate carrier 1">
    <location>
        <begin position="1"/>
        <end position="327"/>
    </location>
</feature>
<feature type="transmembrane region" description="Helical; Name=1" evidence="2">
    <location>
        <begin position="16"/>
        <end position="36"/>
    </location>
</feature>
<feature type="transmembrane region" description="Helical; Name=2" evidence="2">
    <location>
        <begin position="95"/>
        <end position="111"/>
    </location>
</feature>
<feature type="transmembrane region" description="Helical; Name=3" evidence="2">
    <location>
        <begin position="132"/>
        <end position="152"/>
    </location>
</feature>
<feature type="transmembrane region" description="Helical; Name=4" evidence="2">
    <location>
        <begin position="189"/>
        <end position="209"/>
    </location>
</feature>
<feature type="transmembrane region" description="Helical; Name=5" evidence="2">
    <location>
        <begin position="223"/>
        <end position="245"/>
    </location>
</feature>
<feature type="transmembrane region" description="Helical; Name=6" evidence="2">
    <location>
        <begin position="292"/>
        <end position="309"/>
    </location>
</feature>
<feature type="repeat" description="Solcar 1">
    <location>
        <begin position="13"/>
        <end position="114"/>
    </location>
</feature>
<feature type="repeat" description="Solcar 2">
    <location>
        <begin position="126"/>
        <end position="214"/>
    </location>
</feature>
<feature type="repeat" description="Solcar 3">
    <location>
        <begin position="222"/>
        <end position="317"/>
    </location>
</feature>
<protein>
    <recommendedName>
        <fullName>Mitochondrial thiamine pyrophosphate carrier 1</fullName>
    </recommendedName>
</protein>